<accession>Q323J1</accession>
<reference key="1">
    <citation type="journal article" date="2005" name="Nucleic Acids Res.">
        <title>Genome dynamics and diversity of Shigella species, the etiologic agents of bacillary dysentery.</title>
        <authorList>
            <person name="Yang F."/>
            <person name="Yang J."/>
            <person name="Zhang X."/>
            <person name="Chen L."/>
            <person name="Jiang Y."/>
            <person name="Yan Y."/>
            <person name="Tang X."/>
            <person name="Wang J."/>
            <person name="Xiong Z."/>
            <person name="Dong J."/>
            <person name="Xue Y."/>
            <person name="Zhu Y."/>
            <person name="Xu X."/>
            <person name="Sun L."/>
            <person name="Chen S."/>
            <person name="Nie H."/>
            <person name="Peng J."/>
            <person name="Xu J."/>
            <person name="Wang Y."/>
            <person name="Yuan Z."/>
            <person name="Wen Y."/>
            <person name="Yao Z."/>
            <person name="Shen Y."/>
            <person name="Qiang B."/>
            <person name="Hou Y."/>
            <person name="Yu J."/>
            <person name="Jin Q."/>
        </authorList>
    </citation>
    <scope>NUCLEOTIDE SEQUENCE [LARGE SCALE GENOMIC DNA]</scope>
    <source>
        <strain>Sb227</strain>
    </source>
</reference>
<comment type="catalytic activity">
    <reaction evidence="1">
        <text>L-histidinol phosphate + 2-oxoglutarate = 3-(imidazol-4-yl)-2-oxopropyl phosphate + L-glutamate</text>
        <dbReference type="Rhea" id="RHEA:23744"/>
        <dbReference type="ChEBI" id="CHEBI:16810"/>
        <dbReference type="ChEBI" id="CHEBI:29985"/>
        <dbReference type="ChEBI" id="CHEBI:57766"/>
        <dbReference type="ChEBI" id="CHEBI:57980"/>
        <dbReference type="EC" id="2.6.1.9"/>
    </reaction>
</comment>
<comment type="cofactor">
    <cofactor evidence="1">
        <name>pyridoxal 5'-phosphate</name>
        <dbReference type="ChEBI" id="CHEBI:597326"/>
    </cofactor>
</comment>
<comment type="pathway">
    <text evidence="1">Amino-acid biosynthesis; L-histidine biosynthesis; L-histidine from 5-phospho-alpha-D-ribose 1-diphosphate: step 7/9.</text>
</comment>
<comment type="subunit">
    <text evidence="1">Homodimer.</text>
</comment>
<comment type="similarity">
    <text evidence="1">Belongs to the class-II pyridoxal-phosphate-dependent aminotransferase family. Histidinol-phosphate aminotransferase subfamily.</text>
</comment>
<feature type="chain" id="PRO_0000153446" description="Histidinol-phosphate aminotransferase">
    <location>
        <begin position="1"/>
        <end position="356"/>
    </location>
</feature>
<feature type="modified residue" description="N6-(pyridoxal phosphate)lysine" evidence="1">
    <location>
        <position position="214"/>
    </location>
</feature>
<gene>
    <name evidence="1" type="primary">hisC</name>
    <name type="ordered locus">SBO_0847</name>
</gene>
<evidence type="ECO:0000255" key="1">
    <source>
        <dbReference type="HAMAP-Rule" id="MF_01023"/>
    </source>
</evidence>
<keyword id="KW-0028">Amino-acid biosynthesis</keyword>
<keyword id="KW-0032">Aminotransferase</keyword>
<keyword id="KW-0368">Histidine biosynthesis</keyword>
<keyword id="KW-0663">Pyridoxal phosphate</keyword>
<keyword id="KW-0808">Transferase</keyword>
<name>HIS8_SHIBS</name>
<sequence>MSIVTITDLARENVRNLTPYQSARRLGGNGDVWLNANEYPTAVEFQLTQQTLNRYPECQPKAVIENYAQYAGVKPEQVLVSRGADEGIELLIRAFCEPGKDAILYCPPTYGMYGVSAETIGVECRTVPTLDNWQLDLQGISDKLEGVKVVYVCSPNNPTGQLINPQDFRTLLELTRGKAIVVADEAYIEFCPQASLAGWLAEYPHLAILRTLSKAFALAGLRCGFTLANEEVINLLMKVIAPYPLSTPVADIAAQALSPQGIVAMRERVAQIIAERECLIAALKEIPCVEQVFDSETNYILARFKASSAVFKSLWDQGIILRDQNKQPSLSGCLRITVGTREESQRVIDALRAEQV</sequence>
<organism>
    <name type="scientific">Shigella boydii serotype 4 (strain Sb227)</name>
    <dbReference type="NCBI Taxonomy" id="300268"/>
    <lineage>
        <taxon>Bacteria</taxon>
        <taxon>Pseudomonadati</taxon>
        <taxon>Pseudomonadota</taxon>
        <taxon>Gammaproteobacteria</taxon>
        <taxon>Enterobacterales</taxon>
        <taxon>Enterobacteriaceae</taxon>
        <taxon>Shigella</taxon>
    </lineage>
</organism>
<protein>
    <recommendedName>
        <fullName evidence="1">Histidinol-phosphate aminotransferase</fullName>
        <ecNumber evidence="1">2.6.1.9</ecNumber>
    </recommendedName>
    <alternativeName>
        <fullName evidence="1">Imidazole acetol-phosphate transaminase</fullName>
    </alternativeName>
</protein>
<proteinExistence type="inferred from homology"/>
<dbReference type="EC" id="2.6.1.9" evidence="1"/>
<dbReference type="EMBL" id="CP000036">
    <property type="protein sequence ID" value="ABB65517.1"/>
    <property type="molecule type" value="Genomic_DNA"/>
</dbReference>
<dbReference type="RefSeq" id="WP_000029562.1">
    <property type="nucleotide sequence ID" value="NC_007613.1"/>
</dbReference>
<dbReference type="SMR" id="Q323J1"/>
<dbReference type="KEGG" id="sbo:SBO_0847"/>
<dbReference type="HOGENOM" id="CLU_017584_3_1_6"/>
<dbReference type="UniPathway" id="UPA00031">
    <property type="reaction ID" value="UER00012"/>
</dbReference>
<dbReference type="Proteomes" id="UP000007067">
    <property type="component" value="Chromosome"/>
</dbReference>
<dbReference type="GO" id="GO:0004400">
    <property type="term" value="F:histidinol-phosphate transaminase activity"/>
    <property type="evidence" value="ECO:0007669"/>
    <property type="project" value="UniProtKB-UniRule"/>
</dbReference>
<dbReference type="GO" id="GO:0030170">
    <property type="term" value="F:pyridoxal phosphate binding"/>
    <property type="evidence" value="ECO:0007669"/>
    <property type="project" value="InterPro"/>
</dbReference>
<dbReference type="GO" id="GO:0000105">
    <property type="term" value="P:L-histidine biosynthetic process"/>
    <property type="evidence" value="ECO:0007669"/>
    <property type="project" value="UniProtKB-UniRule"/>
</dbReference>
<dbReference type="CDD" id="cd00609">
    <property type="entry name" value="AAT_like"/>
    <property type="match status" value="1"/>
</dbReference>
<dbReference type="FunFam" id="3.40.640.10:FF:000032">
    <property type="entry name" value="Histidinol-phosphate aminotransferase"/>
    <property type="match status" value="1"/>
</dbReference>
<dbReference type="FunFam" id="3.90.1150.10:FF:000042">
    <property type="entry name" value="Histidinol-phosphate aminotransferase"/>
    <property type="match status" value="1"/>
</dbReference>
<dbReference type="Gene3D" id="3.90.1150.10">
    <property type="entry name" value="Aspartate Aminotransferase, domain 1"/>
    <property type="match status" value="1"/>
</dbReference>
<dbReference type="Gene3D" id="3.40.640.10">
    <property type="entry name" value="Type I PLP-dependent aspartate aminotransferase-like (Major domain)"/>
    <property type="match status" value="1"/>
</dbReference>
<dbReference type="HAMAP" id="MF_01023">
    <property type="entry name" value="HisC_aminotrans_2"/>
    <property type="match status" value="1"/>
</dbReference>
<dbReference type="InterPro" id="IPR001917">
    <property type="entry name" value="Aminotrans_II_pyridoxalP_BS"/>
</dbReference>
<dbReference type="InterPro" id="IPR004839">
    <property type="entry name" value="Aminotransferase_I/II_large"/>
</dbReference>
<dbReference type="InterPro" id="IPR005861">
    <property type="entry name" value="HisP_aminotrans"/>
</dbReference>
<dbReference type="InterPro" id="IPR015424">
    <property type="entry name" value="PyrdxlP-dep_Trfase"/>
</dbReference>
<dbReference type="InterPro" id="IPR015421">
    <property type="entry name" value="PyrdxlP-dep_Trfase_major"/>
</dbReference>
<dbReference type="InterPro" id="IPR015422">
    <property type="entry name" value="PyrdxlP-dep_Trfase_small"/>
</dbReference>
<dbReference type="NCBIfam" id="TIGR01141">
    <property type="entry name" value="hisC"/>
    <property type="match status" value="1"/>
</dbReference>
<dbReference type="PANTHER" id="PTHR42885:SF2">
    <property type="entry name" value="HISTIDINOL-PHOSPHATE AMINOTRANSFERASE"/>
    <property type="match status" value="1"/>
</dbReference>
<dbReference type="PANTHER" id="PTHR42885">
    <property type="entry name" value="HISTIDINOL-PHOSPHATE AMINOTRANSFERASE-RELATED"/>
    <property type="match status" value="1"/>
</dbReference>
<dbReference type="Pfam" id="PF00155">
    <property type="entry name" value="Aminotran_1_2"/>
    <property type="match status" value="1"/>
</dbReference>
<dbReference type="SUPFAM" id="SSF53383">
    <property type="entry name" value="PLP-dependent transferases"/>
    <property type="match status" value="1"/>
</dbReference>
<dbReference type="PROSITE" id="PS00599">
    <property type="entry name" value="AA_TRANSFER_CLASS_2"/>
    <property type="match status" value="1"/>
</dbReference>